<comment type="function">
    <text evidence="4 5 6">Cytochrome P450 monooxygenase; part of the gene cluster that mediates the biosynthesis of the phytotoxin solanapyrone, a causal agent of early blight disease of potato and tomato (PubMed:20486243). The prosolanapyrone synthase sol1 is a polyketide synthase that produces the octaketide desmethylprosolanapyrone I via sequential condensations of 7 malonyl-CoA units with one acetyl-CoA unit, and one methylation step (PubMed:20486243). The octaketide backbone is further methylated by the sol2 O-methyltransferase to yield prosolanapyrone I (PubMed:20486243). Prosolanapyrone I is hydroxylated to prosolanapyrone II by the cytochrome P450 monooxygenase sol6 (PubMed:20486243). The solanapyrone synthase sol5 then catalyzes the oxidation of prosolanapyrone II and the subsequent Diels Alder cycloisomerization of the product prosolanapyrone III to solanapyrones A and D (PubMed:18256508, PubMed:9659400). Solanapyrones A and D are then converted into solanapyrones B and E, respectively, by the sol3 dehydrogenase (PubMed:20486243).</text>
</comment>
<comment type="cofactor">
    <cofactor evidence="1">
        <name>heme</name>
        <dbReference type="ChEBI" id="CHEBI:30413"/>
    </cofactor>
</comment>
<comment type="pathway">
    <text evidence="9">Phytotoxin biosynthesis.</text>
</comment>
<comment type="subcellular location">
    <subcellularLocation>
        <location evidence="2">Membrane</location>
        <topology evidence="2">Single-pass membrane protein</topology>
    </subcellularLocation>
</comment>
<comment type="similarity">
    <text evidence="8">Belongs to the cytochrome P450 family.</text>
</comment>
<organism>
    <name type="scientific">Alternaria solani</name>
    <dbReference type="NCBI Taxonomy" id="48100"/>
    <lineage>
        <taxon>Eukaryota</taxon>
        <taxon>Fungi</taxon>
        <taxon>Dikarya</taxon>
        <taxon>Ascomycota</taxon>
        <taxon>Pezizomycotina</taxon>
        <taxon>Dothideomycetes</taxon>
        <taxon>Pleosporomycetidae</taxon>
        <taxon>Pleosporales</taxon>
        <taxon>Pleosporineae</taxon>
        <taxon>Pleosporaceae</taxon>
        <taxon>Alternaria</taxon>
        <taxon>Alternaria sect. Porri</taxon>
    </lineage>
</organism>
<keyword id="KW-0325">Glycoprotein</keyword>
<keyword id="KW-0349">Heme</keyword>
<keyword id="KW-0408">Iron</keyword>
<keyword id="KW-0472">Membrane</keyword>
<keyword id="KW-0479">Metal-binding</keyword>
<keyword id="KW-0503">Monooxygenase</keyword>
<keyword id="KW-0560">Oxidoreductase</keyword>
<keyword id="KW-0812">Transmembrane</keyword>
<keyword id="KW-1133">Transmembrane helix</keyword>
<gene>
    <name type="primary">sol6</name>
</gene>
<accession>D7UQ39</accession>
<evidence type="ECO:0000250" key="1">
    <source>
        <dbReference type="UniProtKB" id="P04798"/>
    </source>
</evidence>
<evidence type="ECO:0000255" key="2"/>
<evidence type="ECO:0000255" key="3">
    <source>
        <dbReference type="PROSITE-ProRule" id="PRU00498"/>
    </source>
</evidence>
<evidence type="ECO:0000269" key="4">
    <source>
    </source>
</evidence>
<evidence type="ECO:0000269" key="5">
    <source>
    </source>
</evidence>
<evidence type="ECO:0000269" key="6">
    <source>
    </source>
</evidence>
<evidence type="ECO:0000303" key="7">
    <source>
    </source>
</evidence>
<evidence type="ECO:0000305" key="8"/>
<evidence type="ECO:0000305" key="9">
    <source>
    </source>
</evidence>
<proteinExistence type="inferred from homology"/>
<feature type="chain" id="PRO_0000438554" description="Cytochrome P450 monooxygenase sol6">
    <location>
        <begin position="1"/>
        <end position="461"/>
    </location>
</feature>
<feature type="transmembrane region" description="Helical" evidence="2">
    <location>
        <begin position="7"/>
        <end position="27"/>
    </location>
</feature>
<feature type="binding site" description="axial binding residue" evidence="1">
    <location>
        <position position="444"/>
    </location>
    <ligand>
        <name>heme</name>
        <dbReference type="ChEBI" id="CHEBI:30413"/>
    </ligand>
    <ligandPart>
        <name>Fe</name>
        <dbReference type="ChEBI" id="CHEBI:18248"/>
    </ligandPart>
</feature>
<feature type="glycosylation site" description="N-linked (GlcNAc...) asparagine" evidence="3">
    <location>
        <position position="307"/>
    </location>
</feature>
<feature type="glycosylation site" description="N-linked (GlcNAc...) asparagine" evidence="3">
    <location>
        <position position="324"/>
    </location>
</feature>
<sequence>MFVPSNIGWLVLSCGLFVAYWVLLAIYRLHFHPLSRYRGPRVAAVSNSWYEWYWNYYLNGQMIFEIQRLHKQYGPVVRIGVNDLSIDDPEVYQAMTKVSSGFTKDPHFYRCISFPGTSIGETDPAQSRIRRKVLTPALSGTRVQELAPAILVKVERLLRRVDLCAQSAKTICITSACKALTMDIISKIVLGREIGCIEEPDFRNSFIENLNAAFETGWIATAFPRLATLALWMASMSDFSSYLEVFDPHSAVYVAREDVNVPSAIAAHADRSAVIDMLMDPLTVKGHTVPSLEQLNDEAVILLTAGNDTTSNSMIFGLYQICNNMSVYKTLFQELQGHFPSVDQQITYEEAKQLPYLTATIKEILRLGTPLPGRLPRLIPSSGFQLYGQDLPPKTSIHTSPYLXNRHPSIWDNPNDFNPDRWLRKNSRDLDKYLATFNRGARQCLGKEWVHSYQIAGLWQD</sequence>
<protein>
    <recommendedName>
        <fullName evidence="7">Cytochrome P450 monooxygenase sol6</fullName>
        <ecNumber evidence="9">1.-.-.-</ecNumber>
    </recommendedName>
    <alternativeName>
        <fullName evidence="7">Solanapyrone biosynthesis protein 6</fullName>
    </alternativeName>
</protein>
<reference key="1">
    <citation type="journal article" date="2010" name="ChemBioChem">
        <title>Solanapyrone synthase, a possible Diels-Alderase and iterative type I polyketide synthase encoded in a biosynthetic gene cluster from Alternaria solani.</title>
        <authorList>
            <person name="Kasahara K."/>
            <person name="Miyamoto T."/>
            <person name="Fujimoto T."/>
            <person name="Oguri H."/>
            <person name="Tokiwano T."/>
            <person name="Oikawa H."/>
            <person name="Ebizuka Y."/>
            <person name="Fujii I."/>
        </authorList>
    </citation>
    <scope>NUCLEOTIDE SEQUENCE [GENOMIC DNA]</scope>
    <scope>FUNCTION</scope>
</reference>
<reference key="2">
    <citation type="journal article" date="1998" name="Biochim. Biophys. Acta">
        <title>Enzymatic activity and partial purification of solanapyrone synthase: first enzyme catalyzing Diels-Alder reaction.</title>
        <authorList>
            <person name="Katayama K."/>
            <person name="Kobayashi T."/>
            <person name="Oikawa H."/>
            <person name="Honma M."/>
            <person name="Ichihara A."/>
        </authorList>
    </citation>
    <scope>FUNCTION</scope>
</reference>
<reference key="3">
    <citation type="journal article" date="2008" name="Biosci. Biotechnol. Biochem.">
        <title>Purification and N-terminal amino acid sequence of solanapyrone synthase, a natural Diels-Alderase from Alternaria solani.</title>
        <authorList>
            <person name="Katayama K."/>
            <person name="Kobayashi T."/>
            <person name="Chijimatsu M."/>
            <person name="Ichihara A."/>
            <person name="Oikawa H."/>
        </authorList>
    </citation>
    <scope>FUNCTION</scope>
</reference>
<dbReference type="EC" id="1.-.-.-" evidence="9"/>
<dbReference type="EMBL" id="AB514562">
    <property type="protein sequence ID" value="BAJ09784.1"/>
    <property type="molecule type" value="Genomic_DNA"/>
</dbReference>
<dbReference type="GlyCosmos" id="D7UQ39">
    <property type="glycosylation" value="2 sites, No reported glycans"/>
</dbReference>
<dbReference type="GO" id="GO:0016020">
    <property type="term" value="C:membrane"/>
    <property type="evidence" value="ECO:0007669"/>
    <property type="project" value="UniProtKB-SubCell"/>
</dbReference>
<dbReference type="GO" id="GO:0020037">
    <property type="term" value="F:heme binding"/>
    <property type="evidence" value="ECO:0007669"/>
    <property type="project" value="InterPro"/>
</dbReference>
<dbReference type="GO" id="GO:0005506">
    <property type="term" value="F:iron ion binding"/>
    <property type="evidence" value="ECO:0007669"/>
    <property type="project" value="InterPro"/>
</dbReference>
<dbReference type="GO" id="GO:0004497">
    <property type="term" value="F:monooxygenase activity"/>
    <property type="evidence" value="ECO:0007669"/>
    <property type="project" value="UniProtKB-KW"/>
</dbReference>
<dbReference type="GO" id="GO:0016705">
    <property type="term" value="F:oxidoreductase activity, acting on paired donors, with incorporation or reduction of molecular oxygen"/>
    <property type="evidence" value="ECO:0007669"/>
    <property type="project" value="InterPro"/>
</dbReference>
<dbReference type="CDD" id="cd11062">
    <property type="entry name" value="CYP58-like"/>
    <property type="match status" value="1"/>
</dbReference>
<dbReference type="Gene3D" id="1.10.630.10">
    <property type="entry name" value="Cytochrome P450"/>
    <property type="match status" value="1"/>
</dbReference>
<dbReference type="InterPro" id="IPR001128">
    <property type="entry name" value="Cyt_P450"/>
</dbReference>
<dbReference type="InterPro" id="IPR002401">
    <property type="entry name" value="Cyt_P450_E_grp-I"/>
</dbReference>
<dbReference type="InterPro" id="IPR036396">
    <property type="entry name" value="Cyt_P450_sf"/>
</dbReference>
<dbReference type="InterPro" id="IPR050121">
    <property type="entry name" value="Cytochrome_P450_monoxygenase"/>
</dbReference>
<dbReference type="PANTHER" id="PTHR24305">
    <property type="entry name" value="CYTOCHROME P450"/>
    <property type="match status" value="1"/>
</dbReference>
<dbReference type="PANTHER" id="PTHR24305:SF166">
    <property type="entry name" value="CYTOCHROME P450 12A4, MITOCHONDRIAL-RELATED"/>
    <property type="match status" value="1"/>
</dbReference>
<dbReference type="Pfam" id="PF00067">
    <property type="entry name" value="p450"/>
    <property type="match status" value="1"/>
</dbReference>
<dbReference type="PRINTS" id="PR00463">
    <property type="entry name" value="EP450I"/>
</dbReference>
<dbReference type="PRINTS" id="PR00385">
    <property type="entry name" value="P450"/>
</dbReference>
<dbReference type="SUPFAM" id="SSF48264">
    <property type="entry name" value="Cytochrome P450"/>
    <property type="match status" value="1"/>
</dbReference>
<dbReference type="PROSITE" id="PS00086">
    <property type="entry name" value="CYTOCHROME_P450"/>
    <property type="match status" value="1"/>
</dbReference>
<name>SOL6_ALTSO</name>